<organism>
    <name type="scientific">Citrobacter koseri (strain ATCC BAA-895 / CDC 4225-83 / SGSC4696)</name>
    <dbReference type="NCBI Taxonomy" id="290338"/>
    <lineage>
        <taxon>Bacteria</taxon>
        <taxon>Pseudomonadati</taxon>
        <taxon>Pseudomonadota</taxon>
        <taxon>Gammaproteobacteria</taxon>
        <taxon>Enterobacterales</taxon>
        <taxon>Enterobacteriaceae</taxon>
        <taxon>Citrobacter</taxon>
    </lineage>
</organism>
<dbReference type="EMBL" id="CP000822">
    <property type="protein sequence ID" value="ABV11543.1"/>
    <property type="molecule type" value="Genomic_DNA"/>
</dbReference>
<dbReference type="RefSeq" id="WP_012131370.1">
    <property type="nucleotide sequence ID" value="NC_009792.1"/>
</dbReference>
<dbReference type="SMR" id="A8ADI0"/>
<dbReference type="STRING" id="290338.CKO_00380"/>
<dbReference type="GeneID" id="45134644"/>
<dbReference type="KEGG" id="cko:CKO_00380"/>
<dbReference type="HOGENOM" id="CLU_070331_1_0_6"/>
<dbReference type="OrthoDB" id="5292355at2"/>
<dbReference type="Proteomes" id="UP000008148">
    <property type="component" value="Chromosome"/>
</dbReference>
<dbReference type="GO" id="GO:0005886">
    <property type="term" value="C:plasma membrane"/>
    <property type="evidence" value="ECO:0007669"/>
    <property type="project" value="UniProtKB-SubCell"/>
</dbReference>
<dbReference type="GO" id="GO:0009675">
    <property type="term" value="F:high-affinity sulfate:proton symporter activity"/>
    <property type="evidence" value="ECO:0007669"/>
    <property type="project" value="TreeGrafter"/>
</dbReference>
<dbReference type="GO" id="GO:0019344">
    <property type="term" value="P:cysteine biosynthetic process"/>
    <property type="evidence" value="ECO:0007669"/>
    <property type="project" value="UniProtKB-UniRule"/>
</dbReference>
<dbReference type="GO" id="GO:0000103">
    <property type="term" value="P:sulfate assimilation"/>
    <property type="evidence" value="ECO:0007669"/>
    <property type="project" value="InterPro"/>
</dbReference>
<dbReference type="HAMAP" id="MF_00468">
    <property type="entry name" value="CysZ"/>
    <property type="match status" value="1"/>
</dbReference>
<dbReference type="InterPro" id="IPR050480">
    <property type="entry name" value="CysZ_sulfate_transptr"/>
</dbReference>
<dbReference type="InterPro" id="IPR022985">
    <property type="entry name" value="Sulfate_CysZ"/>
</dbReference>
<dbReference type="NCBIfam" id="NF003433">
    <property type="entry name" value="PRK04949.1"/>
    <property type="match status" value="1"/>
</dbReference>
<dbReference type="PANTHER" id="PTHR37468">
    <property type="entry name" value="SULFATE TRANSPORTER CYSZ"/>
    <property type="match status" value="1"/>
</dbReference>
<dbReference type="PANTHER" id="PTHR37468:SF1">
    <property type="entry name" value="SULFATE TRANSPORTER CYSZ"/>
    <property type="match status" value="1"/>
</dbReference>
<dbReference type="Pfam" id="PF07264">
    <property type="entry name" value="EI24"/>
    <property type="match status" value="1"/>
</dbReference>
<sequence length="253" mass="28991">MVSSSATAPRSGFYYFSQGWKLVTQPGIRRFVILPLLVNILLMGGAFWWLFTQLDVWIPSLMSHVPDWLQWLSYLLWPIAVISVLLVFGYFFSTIANWIAAPFNGLLAEQLEARLTGATPPDTGVLGIMKDVPRIMKREWQKFIWYLPRAIVLLILYFIPGVGQTVAPVLWFLFSAWMLAIQYCDYPFDNHKVPFKEMRTALRTQKVANMQFGALTSLFTMIPVLNLVIMPVAVCGATAMWVDCYRSKHALWK</sequence>
<gene>
    <name evidence="1" type="primary">cysZ</name>
    <name type="ordered locus">CKO_00380</name>
</gene>
<feature type="chain" id="PRO_1000013709" description="Sulfate transporter CysZ">
    <location>
        <begin position="1"/>
        <end position="253"/>
    </location>
</feature>
<feature type="transmembrane region" description="Helical" evidence="1">
    <location>
        <begin position="31"/>
        <end position="51"/>
    </location>
</feature>
<feature type="transmembrane region" description="Helical" evidence="1">
    <location>
        <begin position="75"/>
        <end position="95"/>
    </location>
</feature>
<feature type="transmembrane region" description="Helical" evidence="1">
    <location>
        <begin position="151"/>
        <end position="171"/>
    </location>
</feature>
<feature type="transmembrane region" description="Helical" evidence="1">
    <location>
        <begin position="222"/>
        <end position="242"/>
    </location>
</feature>
<comment type="function">
    <text evidence="1">High affinity, high specificity proton-dependent sulfate transporter, which mediates sulfate uptake. Provides the sulfur source for the cysteine synthesis pathway.</text>
</comment>
<comment type="subcellular location">
    <subcellularLocation>
        <location evidence="1">Cell inner membrane</location>
        <topology evidence="1">Multi-pass membrane protein</topology>
    </subcellularLocation>
</comment>
<comment type="similarity">
    <text evidence="1">Belongs to the CysZ family.</text>
</comment>
<protein>
    <recommendedName>
        <fullName evidence="1">Sulfate transporter CysZ</fullName>
    </recommendedName>
</protein>
<keyword id="KW-0028">Amino-acid biosynthesis</keyword>
<keyword id="KW-0997">Cell inner membrane</keyword>
<keyword id="KW-1003">Cell membrane</keyword>
<keyword id="KW-0198">Cysteine biosynthesis</keyword>
<keyword id="KW-0472">Membrane</keyword>
<keyword id="KW-1185">Reference proteome</keyword>
<keyword id="KW-0764">Sulfate transport</keyword>
<keyword id="KW-0812">Transmembrane</keyword>
<keyword id="KW-1133">Transmembrane helix</keyword>
<keyword id="KW-0813">Transport</keyword>
<reference key="1">
    <citation type="submission" date="2007-08" db="EMBL/GenBank/DDBJ databases">
        <authorList>
            <consortium name="The Citrobacter koseri Genome Sequencing Project"/>
            <person name="McClelland M."/>
            <person name="Sanderson E.K."/>
            <person name="Porwollik S."/>
            <person name="Spieth J."/>
            <person name="Clifton W.S."/>
            <person name="Latreille P."/>
            <person name="Courtney L."/>
            <person name="Wang C."/>
            <person name="Pepin K."/>
            <person name="Bhonagiri V."/>
            <person name="Nash W."/>
            <person name="Johnson M."/>
            <person name="Thiruvilangam P."/>
            <person name="Wilson R."/>
        </authorList>
    </citation>
    <scope>NUCLEOTIDE SEQUENCE [LARGE SCALE GENOMIC DNA]</scope>
    <source>
        <strain>ATCC BAA-895 / CDC 4225-83 / SGSC4696</strain>
    </source>
</reference>
<proteinExistence type="inferred from homology"/>
<accession>A8ADI0</accession>
<name>CYSZ_CITK8</name>
<evidence type="ECO:0000255" key="1">
    <source>
        <dbReference type="HAMAP-Rule" id="MF_00468"/>
    </source>
</evidence>